<evidence type="ECO:0000250" key="1">
    <source>
        <dbReference type="UniProtKB" id="Q6P5R6"/>
    </source>
</evidence>
<evidence type="ECO:0000305" key="2"/>
<accession>A4FUH0</accession>
<name>RL22L_BOVIN</name>
<comment type="similarity">
    <text evidence="2">Belongs to the eukaryotic ribosomal protein eL22 family.</text>
</comment>
<reference key="1">
    <citation type="submission" date="2006-04" db="EMBL/GenBank/DDBJ databases">
        <authorList>
            <consortium name="NIH - Mammalian Gene Collection (MGC) project"/>
        </authorList>
    </citation>
    <scope>NUCLEOTIDE SEQUENCE [LARGE SCALE MRNA]</scope>
    <source>
        <strain>Hereford</strain>
        <tissue>Thymus</tissue>
    </source>
</reference>
<protein>
    <recommendedName>
        <fullName evidence="2">Ribosomal protein eL22-like</fullName>
    </recommendedName>
    <alternativeName>
        <fullName>60S ribosomal protein L22-like 1</fullName>
    </alternativeName>
    <alternativeName>
        <fullName evidence="2">Large ribosomal subunit protein eL22</fullName>
    </alternativeName>
</protein>
<sequence length="122" mass="14509">MAPKKDKKPKKSTWKFNLDLTHAVEDGIFDSGNFEQFLREKVKVNGKTGNLGNVVHIERFKNKIIVVSEKQFSKRYLKYLTKKYLKKNNLRDWLRVVASDKETYELRYFQISQDEDESESED</sequence>
<keyword id="KW-0597">Phosphoprotein</keyword>
<keyword id="KW-1185">Reference proteome</keyword>
<keyword id="KW-0687">Ribonucleoprotein</keyword>
<keyword id="KW-0689">Ribosomal protein</keyword>
<dbReference type="EMBL" id="BC114880">
    <property type="protein sequence ID" value="AAI14881.1"/>
    <property type="molecule type" value="mRNA"/>
</dbReference>
<dbReference type="RefSeq" id="NP_001091600.1">
    <property type="nucleotide sequence ID" value="NM_001098131.1"/>
</dbReference>
<dbReference type="SMR" id="A4FUH0"/>
<dbReference type="FunCoup" id="A4FUH0">
    <property type="interactions" value="1490"/>
</dbReference>
<dbReference type="STRING" id="9913.ENSBTAP00000018153"/>
<dbReference type="PaxDb" id="9913-ENSBTAP00000018153"/>
<dbReference type="GeneID" id="614872"/>
<dbReference type="KEGG" id="bta:614872"/>
<dbReference type="CTD" id="200916"/>
<dbReference type="eggNOG" id="KOG3434">
    <property type="taxonomic scope" value="Eukaryota"/>
</dbReference>
<dbReference type="InParanoid" id="A4FUH0"/>
<dbReference type="OrthoDB" id="10259820at2759"/>
<dbReference type="Proteomes" id="UP000009136">
    <property type="component" value="Unplaced"/>
</dbReference>
<dbReference type="GO" id="GO:1990904">
    <property type="term" value="C:ribonucleoprotein complex"/>
    <property type="evidence" value="ECO:0007669"/>
    <property type="project" value="UniProtKB-KW"/>
</dbReference>
<dbReference type="GO" id="GO:0005840">
    <property type="term" value="C:ribosome"/>
    <property type="evidence" value="ECO:0007669"/>
    <property type="project" value="UniProtKB-KW"/>
</dbReference>
<dbReference type="GO" id="GO:0003723">
    <property type="term" value="F:RNA binding"/>
    <property type="evidence" value="ECO:0000318"/>
    <property type="project" value="GO_Central"/>
</dbReference>
<dbReference type="GO" id="GO:0003735">
    <property type="term" value="F:structural constituent of ribosome"/>
    <property type="evidence" value="ECO:0000318"/>
    <property type="project" value="GO_Central"/>
</dbReference>
<dbReference type="GO" id="GO:0002181">
    <property type="term" value="P:cytoplasmic translation"/>
    <property type="evidence" value="ECO:0000318"/>
    <property type="project" value="GO_Central"/>
</dbReference>
<dbReference type="FunFam" id="3.30.1360.210:FF:000001">
    <property type="entry name" value="60S ribosomal protein L22 1"/>
    <property type="match status" value="1"/>
</dbReference>
<dbReference type="Gene3D" id="3.30.1360.210">
    <property type="match status" value="1"/>
</dbReference>
<dbReference type="InterPro" id="IPR002671">
    <property type="entry name" value="Ribosomal_eL22"/>
</dbReference>
<dbReference type="InterPro" id="IPR038526">
    <property type="entry name" value="Ribosomal_eL22_sf"/>
</dbReference>
<dbReference type="PANTHER" id="PTHR10064">
    <property type="entry name" value="60S RIBOSOMAL PROTEIN L22"/>
    <property type="match status" value="1"/>
</dbReference>
<dbReference type="PANTHER" id="PTHR10064:SF1">
    <property type="entry name" value="RIBOSOMAL PROTEIN EL22-LIKE"/>
    <property type="match status" value="1"/>
</dbReference>
<dbReference type="Pfam" id="PF01776">
    <property type="entry name" value="Ribosomal_L22e"/>
    <property type="match status" value="1"/>
</dbReference>
<feature type="chain" id="PRO_0000319297" description="Ribosomal protein eL22-like">
    <location>
        <begin position="1"/>
        <end position="122"/>
    </location>
</feature>
<feature type="modified residue" description="Phosphoserine" evidence="1">
    <location>
        <position position="112"/>
    </location>
</feature>
<feature type="modified residue" description="Phosphoserine" evidence="1">
    <location>
        <position position="118"/>
    </location>
</feature>
<feature type="modified residue" description="Phosphoserine" evidence="1">
    <location>
        <position position="120"/>
    </location>
</feature>
<proteinExistence type="evidence at transcript level"/>
<organism>
    <name type="scientific">Bos taurus</name>
    <name type="common">Bovine</name>
    <dbReference type="NCBI Taxonomy" id="9913"/>
    <lineage>
        <taxon>Eukaryota</taxon>
        <taxon>Metazoa</taxon>
        <taxon>Chordata</taxon>
        <taxon>Craniata</taxon>
        <taxon>Vertebrata</taxon>
        <taxon>Euteleostomi</taxon>
        <taxon>Mammalia</taxon>
        <taxon>Eutheria</taxon>
        <taxon>Laurasiatheria</taxon>
        <taxon>Artiodactyla</taxon>
        <taxon>Ruminantia</taxon>
        <taxon>Pecora</taxon>
        <taxon>Bovidae</taxon>
        <taxon>Bovinae</taxon>
        <taxon>Bos</taxon>
    </lineage>
</organism>
<gene>
    <name type="primary">RPL22L1</name>
</gene>